<sequence length="223" mass="23479">MKRTKSIRHASFRKNWSARHLTPVALAVATVFMLAGCEKSDETVSLYQNADDCSAANPGKSAECTTAYNNALKEAERTAPKYATREDCVAEFGEGQCQQAPAQAGMAPENQAQAQQSSGSFWMPLMAGYMMGRLMGGGAGFAQQPLFSSKNPASPAYGKYTDATGKNYGAAQPGRTMTVPKTAMAPKPATTTTVTRGGFGESVAKQSTMQRSATGTSSRSMGG</sequence>
<evidence type="ECO:0000255" key="1">
    <source>
        <dbReference type="HAMAP-Rule" id="MF_01188"/>
    </source>
</evidence>
<evidence type="ECO:0000256" key="2">
    <source>
        <dbReference type="SAM" id="MobiDB-lite"/>
    </source>
</evidence>
<evidence type="ECO:0000305" key="3"/>
<feature type="chain" id="PRO_0000293636" description="UPF0441 protein YgiB">
    <location>
        <begin position="1"/>
        <end position="223"/>
    </location>
</feature>
<feature type="region of interest" description="Disordered" evidence="2">
    <location>
        <begin position="178"/>
        <end position="223"/>
    </location>
</feature>
<feature type="compositionally biased region" description="Low complexity" evidence="2">
    <location>
        <begin position="178"/>
        <end position="195"/>
    </location>
</feature>
<feature type="compositionally biased region" description="Polar residues" evidence="2">
    <location>
        <begin position="204"/>
        <end position="223"/>
    </location>
</feature>
<name>YGIB_ECOK1</name>
<protein>
    <recommendedName>
        <fullName evidence="1">UPF0441 protein YgiB</fullName>
    </recommendedName>
</protein>
<keyword id="KW-1185">Reference proteome</keyword>
<proteinExistence type="inferred from homology"/>
<gene>
    <name evidence="1" type="primary">ygiB</name>
    <name type="ordered locus">Ecok1_30550</name>
    <name type="ORF">APECO1_3377</name>
</gene>
<accession>A1AFV9</accession>
<reference key="1">
    <citation type="journal article" date="2007" name="J. Bacteriol.">
        <title>The genome sequence of avian pathogenic Escherichia coli strain O1:K1:H7 shares strong similarities with human extraintestinal pathogenic E. coli genomes.</title>
        <authorList>
            <person name="Johnson T.J."/>
            <person name="Kariyawasam S."/>
            <person name="Wannemuehler Y."/>
            <person name="Mangiamele P."/>
            <person name="Johnson S.J."/>
            <person name="Doetkott C."/>
            <person name="Skyberg J.A."/>
            <person name="Lynne A.M."/>
            <person name="Johnson J.R."/>
            <person name="Nolan L.K."/>
        </authorList>
    </citation>
    <scope>NUCLEOTIDE SEQUENCE [LARGE SCALE GENOMIC DNA]</scope>
</reference>
<comment type="similarity">
    <text evidence="1">Belongs to the UPF0441 family.</text>
</comment>
<comment type="sequence caution" evidence="3">
    <conflict type="erroneous initiation">
        <sequence resource="EMBL-CDS" id="ABJ02549"/>
    </conflict>
</comment>
<dbReference type="EMBL" id="CP000468">
    <property type="protein sequence ID" value="ABJ02549.1"/>
    <property type="status" value="ALT_INIT"/>
    <property type="molecule type" value="Genomic_DNA"/>
</dbReference>
<dbReference type="RefSeq" id="WP_000831543.1">
    <property type="nucleotide sequence ID" value="NZ_CADILS010000079.1"/>
</dbReference>
<dbReference type="SMR" id="A1AFV9"/>
<dbReference type="KEGG" id="ecv:APECO1_3377"/>
<dbReference type="HOGENOM" id="CLU_095624_0_0_6"/>
<dbReference type="Proteomes" id="UP000008216">
    <property type="component" value="Chromosome"/>
</dbReference>
<dbReference type="HAMAP" id="MF_01188">
    <property type="entry name" value="UPF0441"/>
    <property type="match status" value="1"/>
</dbReference>
<dbReference type="InterPro" id="IPR009576">
    <property type="entry name" value="Biofilm_formation_YgiB"/>
</dbReference>
<dbReference type="NCBIfam" id="NF008655">
    <property type="entry name" value="PRK11653.1"/>
    <property type="match status" value="1"/>
</dbReference>
<dbReference type="Pfam" id="PF06693">
    <property type="entry name" value="DUF1190"/>
    <property type="match status" value="1"/>
</dbReference>
<organism>
    <name type="scientific">Escherichia coli O1:K1 / APEC</name>
    <dbReference type="NCBI Taxonomy" id="405955"/>
    <lineage>
        <taxon>Bacteria</taxon>
        <taxon>Pseudomonadati</taxon>
        <taxon>Pseudomonadota</taxon>
        <taxon>Gammaproteobacteria</taxon>
        <taxon>Enterobacterales</taxon>
        <taxon>Enterobacteriaceae</taxon>
        <taxon>Escherichia</taxon>
    </lineage>
</organism>